<accession>A6ZTT5</accession>
<comment type="function">
    <text evidence="1">Reduces acetaldehyde to ethanol during glucose fermentation. Specific for ethanol. Shows drastically reduced activity towards primary alcohols from 4 carbon atoms upward. Isomers of aliphatic alcohol, as well as secondary alcohols and glycerol are not used at all (By similarity).</text>
</comment>
<comment type="catalytic activity">
    <reaction>
        <text>a primary alcohol + NAD(+) = an aldehyde + NADH + H(+)</text>
        <dbReference type="Rhea" id="RHEA:10736"/>
        <dbReference type="ChEBI" id="CHEBI:15378"/>
        <dbReference type="ChEBI" id="CHEBI:15734"/>
        <dbReference type="ChEBI" id="CHEBI:17478"/>
        <dbReference type="ChEBI" id="CHEBI:57540"/>
        <dbReference type="ChEBI" id="CHEBI:57945"/>
        <dbReference type="EC" id="1.1.1.1"/>
    </reaction>
</comment>
<comment type="catalytic activity">
    <reaction>
        <text>a secondary alcohol + NAD(+) = a ketone + NADH + H(+)</text>
        <dbReference type="Rhea" id="RHEA:10740"/>
        <dbReference type="ChEBI" id="CHEBI:15378"/>
        <dbReference type="ChEBI" id="CHEBI:17087"/>
        <dbReference type="ChEBI" id="CHEBI:35681"/>
        <dbReference type="ChEBI" id="CHEBI:57540"/>
        <dbReference type="ChEBI" id="CHEBI:57945"/>
        <dbReference type="EC" id="1.1.1.1"/>
    </reaction>
</comment>
<comment type="cofactor">
    <cofactor evidence="1">
        <name>Zn(2+)</name>
        <dbReference type="ChEBI" id="CHEBI:29105"/>
    </cofactor>
    <cofactor evidence="1">
        <name>Fe(2+)</name>
        <dbReference type="ChEBI" id="CHEBI:29033"/>
    </cofactor>
    <text evidence="1">Zinc. May bind iron when zinc levels are limiting.</text>
</comment>
<comment type="activity regulation">
    <text evidence="1">Inhibited by EDTA.</text>
</comment>
<comment type="subunit">
    <text evidence="1">Homodimer.</text>
</comment>
<comment type="subcellular location">
    <subcellularLocation>
        <location evidence="1">Mitochondrion</location>
    </subcellularLocation>
</comment>
<comment type="induction">
    <text evidence="1">Induced by transcription factor ZAP1 in response to zinc deficiency.</text>
</comment>
<comment type="miscellaneous">
    <text>While ADH4 is expressed at only low levels in laboratory strains, it is often highly expressed in brewing strains.</text>
</comment>
<comment type="similarity">
    <text evidence="2">Belongs to the iron-containing alcohol dehydrogenase family.</text>
</comment>
<comment type="sequence caution" evidence="2">
    <conflict type="erroneous initiation">
        <sequence resource="EMBL-CDS" id="EDN61873"/>
    </conflict>
</comment>
<dbReference type="EC" id="1.1.1.1"/>
<dbReference type="EMBL" id="AAFW02000099">
    <property type="protein sequence ID" value="EDN61873.1"/>
    <property type="status" value="ALT_INIT"/>
    <property type="molecule type" value="Genomic_DNA"/>
</dbReference>
<dbReference type="SMR" id="A6ZTT5"/>
<dbReference type="HOGENOM" id="CLU_007207_0_0_1"/>
<dbReference type="OrthoDB" id="26643at4893"/>
<dbReference type="Proteomes" id="UP000007060">
    <property type="component" value="Unassembled WGS sequence"/>
</dbReference>
<dbReference type="GO" id="GO:0005739">
    <property type="term" value="C:mitochondrion"/>
    <property type="evidence" value="ECO:0007669"/>
    <property type="project" value="UniProtKB-SubCell"/>
</dbReference>
<dbReference type="GO" id="GO:0004022">
    <property type="term" value="F:alcohol dehydrogenase (NAD+) activity"/>
    <property type="evidence" value="ECO:0007669"/>
    <property type="project" value="UniProtKB-EC"/>
</dbReference>
<dbReference type="GO" id="GO:0046872">
    <property type="term" value="F:metal ion binding"/>
    <property type="evidence" value="ECO:0007669"/>
    <property type="project" value="UniProtKB-KW"/>
</dbReference>
<dbReference type="CDD" id="cd08188">
    <property type="entry name" value="PDDH"/>
    <property type="match status" value="1"/>
</dbReference>
<dbReference type="FunFam" id="3.40.50.1970:FF:000003">
    <property type="entry name" value="Alcohol dehydrogenase, iron-containing"/>
    <property type="match status" value="1"/>
</dbReference>
<dbReference type="FunFam" id="1.20.1090.10:FF:000001">
    <property type="entry name" value="Aldehyde-alcohol dehydrogenase"/>
    <property type="match status" value="1"/>
</dbReference>
<dbReference type="Gene3D" id="3.40.50.1970">
    <property type="match status" value="1"/>
</dbReference>
<dbReference type="Gene3D" id="1.20.1090.10">
    <property type="entry name" value="Dehydroquinate synthase-like - alpha domain"/>
    <property type="match status" value="1"/>
</dbReference>
<dbReference type="InterPro" id="IPR001670">
    <property type="entry name" value="ADH_Fe/GldA"/>
</dbReference>
<dbReference type="InterPro" id="IPR056798">
    <property type="entry name" value="ADH_Fe_C"/>
</dbReference>
<dbReference type="InterPro" id="IPR018211">
    <property type="entry name" value="ADH_Fe_CS"/>
</dbReference>
<dbReference type="InterPro" id="IPR039697">
    <property type="entry name" value="Alcohol_dehydrogenase_Fe"/>
</dbReference>
<dbReference type="PANTHER" id="PTHR11496">
    <property type="entry name" value="ALCOHOL DEHYDROGENASE"/>
    <property type="match status" value="1"/>
</dbReference>
<dbReference type="PANTHER" id="PTHR11496:SF102">
    <property type="entry name" value="ALCOHOL DEHYDROGENASE 4"/>
    <property type="match status" value="1"/>
</dbReference>
<dbReference type="Pfam" id="PF25137">
    <property type="entry name" value="ADH_Fe_C"/>
    <property type="match status" value="1"/>
</dbReference>
<dbReference type="Pfam" id="PF00465">
    <property type="entry name" value="Fe-ADH"/>
    <property type="match status" value="1"/>
</dbReference>
<dbReference type="SUPFAM" id="SSF56796">
    <property type="entry name" value="Dehydroquinate synthase-like"/>
    <property type="match status" value="1"/>
</dbReference>
<dbReference type="PROSITE" id="PS00913">
    <property type="entry name" value="ADH_IRON_1"/>
    <property type="match status" value="1"/>
</dbReference>
<dbReference type="PROSITE" id="PS00060">
    <property type="entry name" value="ADH_IRON_2"/>
    <property type="match status" value="1"/>
</dbReference>
<reference key="1">
    <citation type="journal article" date="2007" name="Proc. Natl. Acad. Sci. U.S.A.">
        <title>Genome sequencing and comparative analysis of Saccharomyces cerevisiae strain YJM789.</title>
        <authorList>
            <person name="Wei W."/>
            <person name="McCusker J.H."/>
            <person name="Hyman R.W."/>
            <person name="Jones T."/>
            <person name="Ning Y."/>
            <person name="Cao Z."/>
            <person name="Gu Z."/>
            <person name="Bruno D."/>
            <person name="Miranda M."/>
            <person name="Nguyen M."/>
            <person name="Wilhelmy J."/>
            <person name="Komp C."/>
            <person name="Tamse R."/>
            <person name="Wang X."/>
            <person name="Jia P."/>
            <person name="Luedi P."/>
            <person name="Oefner P.J."/>
            <person name="David L."/>
            <person name="Dietrich F.S."/>
            <person name="Li Y."/>
            <person name="Davis R.W."/>
            <person name="Steinmetz L.M."/>
        </authorList>
    </citation>
    <scope>NUCLEOTIDE SEQUENCE [LARGE SCALE GENOMIC DNA]</scope>
    <source>
        <strain>YJM789</strain>
    </source>
</reference>
<protein>
    <recommendedName>
        <fullName>Alcohol dehydrogenase 4</fullName>
        <ecNumber>1.1.1.1</ecNumber>
    </recommendedName>
    <alternativeName>
        <fullName>Alcohol dehydrogenase IV</fullName>
        <shortName>ADHIV</shortName>
    </alternativeName>
</protein>
<organism>
    <name type="scientific">Saccharomyces cerevisiae (strain YJM789)</name>
    <name type="common">Baker's yeast</name>
    <dbReference type="NCBI Taxonomy" id="307796"/>
    <lineage>
        <taxon>Eukaryota</taxon>
        <taxon>Fungi</taxon>
        <taxon>Dikarya</taxon>
        <taxon>Ascomycota</taxon>
        <taxon>Saccharomycotina</taxon>
        <taxon>Saccharomycetes</taxon>
        <taxon>Saccharomycetales</taxon>
        <taxon>Saccharomycetaceae</taxon>
        <taxon>Saccharomyces</taxon>
    </lineage>
</organism>
<keyword id="KW-0479">Metal-binding</keyword>
<keyword id="KW-0496">Mitochondrion</keyword>
<keyword id="KW-0520">NAD</keyword>
<keyword id="KW-0560">Oxidoreductase</keyword>
<keyword id="KW-0862">Zinc</keyword>
<gene>
    <name type="primary">ADH4</name>
    <name type="synonym">ZRG5</name>
    <name type="ORF">SCY_1818</name>
</gene>
<evidence type="ECO:0000250" key="1"/>
<evidence type="ECO:0000305" key="2"/>
<name>ADH4_YEAS7</name>
<sequence length="382" mass="41084">MSSVTGFYIPPISFFGEGALEETADYIKNKDYKKALIVTDPGIAAIGLSGRVQKMLEERGLNVAIYDKTQPNPNIANVTAGLKVLKEQNSEIVVSIGGGSAHDNAKAIALLATNGGEIGDYEGVNQSKKAALPLFAINTTAGTASEMTRFTIISNEEKKIKMAIIDNNVTPAVAVNDPSTMFGLPPALTAATGLDALTHCIEAYVSTASNPITDACALKGIDLINESLVAAYKDGKDKKARTDMCYAEYLAGMAFNNASLGYVHALAHQLGGFYHLPHGVCNAVLLPHVQEANMQCPKAKKRLGEIALHFGASQEDPEETIKALHVLNRTMNIPRNLKELGVKTEDFEILAEHAMHDACHLTNPVQFTKEQVVAIIKKAYEY</sequence>
<feature type="chain" id="PRO_0000345089" description="Alcohol dehydrogenase 4">
    <location>
        <begin position="1"/>
        <end position="382"/>
    </location>
</feature>
<proteinExistence type="inferred from homology"/>